<dbReference type="EMBL" id="AK002479">
    <property type="protein sequence ID" value="BAB22132.1"/>
    <property type="molecule type" value="mRNA"/>
</dbReference>
<dbReference type="EMBL" id="AK003310">
    <property type="protein sequence ID" value="BAB22707.1"/>
    <property type="molecule type" value="mRNA"/>
</dbReference>
<dbReference type="EMBL" id="BC031492">
    <property type="protein sequence ID" value="AAH31492.1"/>
    <property type="molecule type" value="mRNA"/>
</dbReference>
<dbReference type="EMBL" id="BC043030">
    <property type="protein sequence ID" value="AAH43030.1"/>
    <property type="status" value="ALT_INIT"/>
    <property type="molecule type" value="mRNA"/>
</dbReference>
<dbReference type="CCDS" id="CCDS50960.1"/>
<dbReference type="RefSeq" id="NP_079603.1">
    <property type="nucleotide sequence ID" value="NM_025327.3"/>
</dbReference>
<dbReference type="RefSeq" id="XP_030108608.1">
    <property type="nucleotide sequence ID" value="XM_030252748.2"/>
</dbReference>
<dbReference type="BioGRID" id="211185">
    <property type="interactions" value="2"/>
</dbReference>
<dbReference type="ComplexPortal" id="CPX-5821">
    <property type="entry name" value="Oligosaccharyltransferase complex A"/>
</dbReference>
<dbReference type="FunCoup" id="Q5RL79">
    <property type="interactions" value="457"/>
</dbReference>
<dbReference type="STRING" id="10090.ENSMUSP00000043540"/>
<dbReference type="iPTMnet" id="Q5RL79"/>
<dbReference type="PhosphoSitePlus" id="Q5RL79"/>
<dbReference type="SwissPalm" id="Q5RL79"/>
<dbReference type="jPOST" id="Q5RL79"/>
<dbReference type="PaxDb" id="10090-ENSMUSP00000043540"/>
<dbReference type="PeptideAtlas" id="Q5RL79"/>
<dbReference type="ProteomicsDB" id="264881"/>
<dbReference type="Antibodypedia" id="56363">
    <property type="antibodies" value="61 antibodies from 15 providers"/>
</dbReference>
<dbReference type="DNASU" id="66059"/>
<dbReference type="Ensembl" id="ENSMUST00000040888.12">
    <property type="protein sequence ID" value="ENSMUSP00000043540.7"/>
    <property type="gene ID" value="ENSMUSG00000042747.13"/>
</dbReference>
<dbReference type="GeneID" id="66059"/>
<dbReference type="KEGG" id="mmu:66059"/>
<dbReference type="UCSC" id="uc008pyl.1">
    <property type="organism name" value="mouse"/>
</dbReference>
<dbReference type="AGR" id="MGI:1913309"/>
<dbReference type="CTD" id="200185"/>
<dbReference type="MGI" id="MGI:1913309">
    <property type="gene designation" value="Krtcap2"/>
</dbReference>
<dbReference type="VEuPathDB" id="HostDB:ENSMUSG00000042747"/>
<dbReference type="eggNOG" id="KOG4615">
    <property type="taxonomic scope" value="Eukaryota"/>
</dbReference>
<dbReference type="GeneTree" id="ENSGT00390000003552"/>
<dbReference type="InParanoid" id="Q5RL79"/>
<dbReference type="OMA" id="ITIYYMN"/>
<dbReference type="PhylomeDB" id="Q5RL79"/>
<dbReference type="TreeFam" id="TF324347"/>
<dbReference type="UniPathway" id="UPA00378"/>
<dbReference type="BioGRID-ORCS" id="66059">
    <property type="hits" value="4 hits in 77 CRISPR screens"/>
</dbReference>
<dbReference type="ChiTaRS" id="Krtcap2">
    <property type="organism name" value="mouse"/>
</dbReference>
<dbReference type="PRO" id="PR:Q5RL79"/>
<dbReference type="Proteomes" id="UP000000589">
    <property type="component" value="Chromosome 3"/>
</dbReference>
<dbReference type="RNAct" id="Q5RL79">
    <property type="molecule type" value="protein"/>
</dbReference>
<dbReference type="Bgee" id="ENSMUSG00000042747">
    <property type="expression patterns" value="Expressed in paneth cell and 271 other cell types or tissues"/>
</dbReference>
<dbReference type="ExpressionAtlas" id="Q5RL79">
    <property type="expression patterns" value="baseline and differential"/>
</dbReference>
<dbReference type="GO" id="GO:0008250">
    <property type="term" value="C:oligosaccharyltransferase complex"/>
    <property type="evidence" value="ECO:0000314"/>
    <property type="project" value="HGNC-UCL"/>
</dbReference>
<dbReference type="GO" id="GO:0008047">
    <property type="term" value="F:enzyme activator activity"/>
    <property type="evidence" value="ECO:0007669"/>
    <property type="project" value="Ensembl"/>
</dbReference>
<dbReference type="GO" id="GO:0030674">
    <property type="term" value="F:protein-macromolecule adaptor activity"/>
    <property type="evidence" value="ECO:0007669"/>
    <property type="project" value="Ensembl"/>
</dbReference>
<dbReference type="GO" id="GO:0018279">
    <property type="term" value="P:protein N-linked glycosylation via asparagine"/>
    <property type="evidence" value="ECO:0007669"/>
    <property type="project" value="Ensembl"/>
</dbReference>
<dbReference type="InterPro" id="IPR018614">
    <property type="entry name" value="KRTCAP2"/>
</dbReference>
<dbReference type="PANTHER" id="PTHR32001">
    <property type="entry name" value="KERATINOCYTE-ASSOCIATED PROTEIN 2"/>
    <property type="match status" value="1"/>
</dbReference>
<dbReference type="PANTHER" id="PTHR32001:SF1">
    <property type="entry name" value="KERATINOCYTE-ASSOCIATED PROTEIN 2"/>
    <property type="match status" value="1"/>
</dbReference>
<dbReference type="Pfam" id="PF09775">
    <property type="entry name" value="Keratin_assoc"/>
    <property type="match status" value="1"/>
</dbReference>
<keyword id="KW-0256">Endoplasmic reticulum</keyword>
<keyword id="KW-0472">Membrane</keyword>
<keyword id="KW-0597">Phosphoprotein</keyword>
<keyword id="KW-1185">Reference proteome</keyword>
<keyword id="KW-0812">Transmembrane</keyword>
<keyword id="KW-1133">Transmembrane helix</keyword>
<proteinExistence type="evidence at protein level"/>
<accession>Q5RL79</accession>
<accession>Q9CQK5</accession>
<feature type="chain" id="PRO_0000226993" description="Dolichyl-diphosphooligosaccharide--protein glycosyltransferase subunit KCP2">
    <location>
        <begin position="1"/>
        <end position="136"/>
    </location>
</feature>
<feature type="topological domain" description="Lumenal" evidence="2">
    <location>
        <begin position="1"/>
        <end position="5"/>
    </location>
</feature>
<feature type="transmembrane region" description="Helical" evidence="2">
    <location>
        <begin position="6"/>
        <end position="23"/>
    </location>
</feature>
<feature type="topological domain" description="Cytoplasmic" evidence="2">
    <location>
        <begin position="24"/>
        <end position="34"/>
    </location>
</feature>
<feature type="transmembrane region" description="Helical" evidence="2">
    <location>
        <begin position="35"/>
        <end position="55"/>
    </location>
</feature>
<feature type="topological domain" description="Lumenal" evidence="2">
    <location>
        <begin position="56"/>
        <end position="75"/>
    </location>
</feature>
<feature type="transmembrane region" description="Helical" evidence="2">
    <location>
        <begin position="76"/>
        <end position="108"/>
    </location>
</feature>
<feature type="topological domain" description="Cytoplasmic" evidence="2">
    <location>
        <begin position="109"/>
        <end position="136"/>
    </location>
</feature>
<feature type="short sequence motif" description="Prevents secretion from ER" evidence="2">
    <location>
        <begin position="133"/>
        <end position="136"/>
    </location>
</feature>
<feature type="modified residue" description="Phosphothreonine" evidence="1">
    <location>
        <position position="124"/>
    </location>
</feature>
<reference key="1">
    <citation type="journal article" date="2005" name="Science">
        <title>The transcriptional landscape of the mammalian genome.</title>
        <authorList>
            <person name="Carninci P."/>
            <person name="Kasukawa T."/>
            <person name="Katayama S."/>
            <person name="Gough J."/>
            <person name="Frith M.C."/>
            <person name="Maeda N."/>
            <person name="Oyama R."/>
            <person name="Ravasi T."/>
            <person name="Lenhard B."/>
            <person name="Wells C."/>
            <person name="Kodzius R."/>
            <person name="Shimokawa K."/>
            <person name="Bajic V.B."/>
            <person name="Brenner S.E."/>
            <person name="Batalov S."/>
            <person name="Forrest A.R."/>
            <person name="Zavolan M."/>
            <person name="Davis M.J."/>
            <person name="Wilming L.G."/>
            <person name="Aidinis V."/>
            <person name="Allen J.E."/>
            <person name="Ambesi-Impiombato A."/>
            <person name="Apweiler R."/>
            <person name="Aturaliya R.N."/>
            <person name="Bailey T.L."/>
            <person name="Bansal M."/>
            <person name="Baxter L."/>
            <person name="Beisel K.W."/>
            <person name="Bersano T."/>
            <person name="Bono H."/>
            <person name="Chalk A.M."/>
            <person name="Chiu K.P."/>
            <person name="Choudhary V."/>
            <person name="Christoffels A."/>
            <person name="Clutterbuck D.R."/>
            <person name="Crowe M.L."/>
            <person name="Dalla E."/>
            <person name="Dalrymple B.P."/>
            <person name="de Bono B."/>
            <person name="Della Gatta G."/>
            <person name="di Bernardo D."/>
            <person name="Down T."/>
            <person name="Engstrom P."/>
            <person name="Fagiolini M."/>
            <person name="Faulkner G."/>
            <person name="Fletcher C.F."/>
            <person name="Fukushima T."/>
            <person name="Furuno M."/>
            <person name="Futaki S."/>
            <person name="Gariboldi M."/>
            <person name="Georgii-Hemming P."/>
            <person name="Gingeras T.R."/>
            <person name="Gojobori T."/>
            <person name="Green R.E."/>
            <person name="Gustincich S."/>
            <person name="Harbers M."/>
            <person name="Hayashi Y."/>
            <person name="Hensch T.K."/>
            <person name="Hirokawa N."/>
            <person name="Hill D."/>
            <person name="Huminiecki L."/>
            <person name="Iacono M."/>
            <person name="Ikeo K."/>
            <person name="Iwama A."/>
            <person name="Ishikawa T."/>
            <person name="Jakt M."/>
            <person name="Kanapin A."/>
            <person name="Katoh M."/>
            <person name="Kawasawa Y."/>
            <person name="Kelso J."/>
            <person name="Kitamura H."/>
            <person name="Kitano H."/>
            <person name="Kollias G."/>
            <person name="Krishnan S.P."/>
            <person name="Kruger A."/>
            <person name="Kummerfeld S.K."/>
            <person name="Kurochkin I.V."/>
            <person name="Lareau L.F."/>
            <person name="Lazarevic D."/>
            <person name="Lipovich L."/>
            <person name="Liu J."/>
            <person name="Liuni S."/>
            <person name="McWilliam S."/>
            <person name="Madan Babu M."/>
            <person name="Madera M."/>
            <person name="Marchionni L."/>
            <person name="Matsuda H."/>
            <person name="Matsuzawa S."/>
            <person name="Miki H."/>
            <person name="Mignone F."/>
            <person name="Miyake S."/>
            <person name="Morris K."/>
            <person name="Mottagui-Tabar S."/>
            <person name="Mulder N."/>
            <person name="Nakano N."/>
            <person name="Nakauchi H."/>
            <person name="Ng P."/>
            <person name="Nilsson R."/>
            <person name="Nishiguchi S."/>
            <person name="Nishikawa S."/>
            <person name="Nori F."/>
            <person name="Ohara O."/>
            <person name="Okazaki Y."/>
            <person name="Orlando V."/>
            <person name="Pang K.C."/>
            <person name="Pavan W.J."/>
            <person name="Pavesi G."/>
            <person name="Pesole G."/>
            <person name="Petrovsky N."/>
            <person name="Piazza S."/>
            <person name="Reed J."/>
            <person name="Reid J.F."/>
            <person name="Ring B.Z."/>
            <person name="Ringwald M."/>
            <person name="Rost B."/>
            <person name="Ruan Y."/>
            <person name="Salzberg S.L."/>
            <person name="Sandelin A."/>
            <person name="Schneider C."/>
            <person name="Schoenbach C."/>
            <person name="Sekiguchi K."/>
            <person name="Semple C.A."/>
            <person name="Seno S."/>
            <person name="Sessa L."/>
            <person name="Sheng Y."/>
            <person name="Shibata Y."/>
            <person name="Shimada H."/>
            <person name="Shimada K."/>
            <person name="Silva D."/>
            <person name="Sinclair B."/>
            <person name="Sperling S."/>
            <person name="Stupka E."/>
            <person name="Sugiura K."/>
            <person name="Sultana R."/>
            <person name="Takenaka Y."/>
            <person name="Taki K."/>
            <person name="Tammoja K."/>
            <person name="Tan S.L."/>
            <person name="Tang S."/>
            <person name="Taylor M.S."/>
            <person name="Tegner J."/>
            <person name="Teichmann S.A."/>
            <person name="Ueda H.R."/>
            <person name="van Nimwegen E."/>
            <person name="Verardo R."/>
            <person name="Wei C.L."/>
            <person name="Yagi K."/>
            <person name="Yamanishi H."/>
            <person name="Zabarovsky E."/>
            <person name="Zhu S."/>
            <person name="Zimmer A."/>
            <person name="Hide W."/>
            <person name="Bult C."/>
            <person name="Grimmond S.M."/>
            <person name="Teasdale R.D."/>
            <person name="Liu E.T."/>
            <person name="Brusic V."/>
            <person name="Quackenbush J."/>
            <person name="Wahlestedt C."/>
            <person name="Mattick J.S."/>
            <person name="Hume D.A."/>
            <person name="Kai C."/>
            <person name="Sasaki D."/>
            <person name="Tomaru Y."/>
            <person name="Fukuda S."/>
            <person name="Kanamori-Katayama M."/>
            <person name="Suzuki M."/>
            <person name="Aoki J."/>
            <person name="Arakawa T."/>
            <person name="Iida J."/>
            <person name="Imamura K."/>
            <person name="Itoh M."/>
            <person name="Kato T."/>
            <person name="Kawaji H."/>
            <person name="Kawagashira N."/>
            <person name="Kawashima T."/>
            <person name="Kojima M."/>
            <person name="Kondo S."/>
            <person name="Konno H."/>
            <person name="Nakano K."/>
            <person name="Ninomiya N."/>
            <person name="Nishio T."/>
            <person name="Okada M."/>
            <person name="Plessy C."/>
            <person name="Shibata K."/>
            <person name="Shiraki T."/>
            <person name="Suzuki S."/>
            <person name="Tagami M."/>
            <person name="Waki K."/>
            <person name="Watahiki A."/>
            <person name="Okamura-Oho Y."/>
            <person name="Suzuki H."/>
            <person name="Kawai J."/>
            <person name="Hayashizaki Y."/>
        </authorList>
    </citation>
    <scope>NUCLEOTIDE SEQUENCE [LARGE SCALE MRNA]</scope>
    <source>
        <strain>C57BL/6J</strain>
        <tissue>Embryo</tissue>
        <tissue>Kidney</tissue>
    </source>
</reference>
<reference key="2">
    <citation type="journal article" date="2004" name="Genome Res.">
        <title>The status, quality, and expansion of the NIH full-length cDNA project: the Mammalian Gene Collection (MGC).</title>
        <authorList>
            <consortium name="The MGC Project Team"/>
        </authorList>
    </citation>
    <scope>NUCLEOTIDE SEQUENCE [LARGE SCALE MRNA]</scope>
    <source>
        <strain>C57BL/6J</strain>
        <tissue>Fetal brain</tissue>
        <tissue>Mammary tumor</tissue>
    </source>
</reference>
<reference key="3">
    <citation type="journal article" date="2010" name="Cell">
        <title>A tissue-specific atlas of mouse protein phosphorylation and expression.</title>
        <authorList>
            <person name="Huttlin E.L."/>
            <person name="Jedrychowski M.P."/>
            <person name="Elias J.E."/>
            <person name="Goswami T."/>
            <person name="Rad R."/>
            <person name="Beausoleil S.A."/>
            <person name="Villen J."/>
            <person name="Haas W."/>
            <person name="Sowa M.E."/>
            <person name="Gygi S.P."/>
        </authorList>
    </citation>
    <scope>IDENTIFICATION BY MASS SPECTROMETRY [LARGE SCALE ANALYSIS]</scope>
    <source>
        <tissue>Brain</tissue>
        <tissue>Heart</tissue>
        <tissue>Kidney</tissue>
        <tissue>Liver</tissue>
        <tissue>Lung</tissue>
        <tissue>Pancreas</tissue>
        <tissue>Spleen</tissue>
        <tissue>Testis</tissue>
    </source>
</reference>
<protein>
    <recommendedName>
        <fullName>Dolichyl-diphosphooligosaccharide--protein glycosyltransferase subunit KCP2</fullName>
        <shortName>Oligosaccharyl transferase subunit KCP2</shortName>
    </recommendedName>
    <alternativeName>
        <fullName>Keratinocyte-associated protein 2</fullName>
        <shortName>KCP-2</shortName>
    </alternativeName>
</protein>
<evidence type="ECO:0000250" key="1">
    <source>
        <dbReference type="UniProtKB" id="Q8N6L1"/>
    </source>
</evidence>
<evidence type="ECO:0000255" key="2"/>
<evidence type="ECO:0000305" key="3"/>
<organism>
    <name type="scientific">Mus musculus</name>
    <name type="common">Mouse</name>
    <dbReference type="NCBI Taxonomy" id="10090"/>
    <lineage>
        <taxon>Eukaryota</taxon>
        <taxon>Metazoa</taxon>
        <taxon>Chordata</taxon>
        <taxon>Craniata</taxon>
        <taxon>Vertebrata</taxon>
        <taxon>Euteleostomi</taxon>
        <taxon>Mammalia</taxon>
        <taxon>Eutheria</taxon>
        <taxon>Euarchontoglires</taxon>
        <taxon>Glires</taxon>
        <taxon>Rodentia</taxon>
        <taxon>Myomorpha</taxon>
        <taxon>Muroidea</taxon>
        <taxon>Muridae</taxon>
        <taxon>Murinae</taxon>
        <taxon>Mus</taxon>
        <taxon>Mus</taxon>
    </lineage>
</organism>
<gene>
    <name type="primary">Krtcap2</name>
</gene>
<name>KTAP2_MOUSE</name>
<sequence>MVVGTGTSLALSSLLSLLLFAGMQIYSRQLASTEWLTIQGGLLGSGLFVFSLTAFNNLENLVFGKGFQAKIFPEILLCLLLALFASGLIHRVCVTTCFIFSMVGLYYINKISSTLYQATAPVLTPAKITGKGKKRN</sequence>
<comment type="function">
    <text evidence="1">Subunit of STT3A-containing oligosaccharyl transferase (OST-A) complex that catalyzes the initial transfer of a defined glycan (Glc(3)Man(9)GlcNAc(2) in eukaryotes) from the lipid carrier dolichol-pyrophosphate to an asparagine residue within an Asn-X-Ser/Thr consensus motif in nascent polypeptide chains, the first step in protein N-glycosylation. N-glycosylation occurs cotranslationally and the complex associates with the Sec61 complex at the channel-forming translocon complex that mediates protein translocation across the endoplasmic reticulum (ER). Within the OST-A complex, acts as an adapter that anchors the OST-A complex to the Sec61 complex. May be involved in N-glycosylation of APP (amyloid-beta precursor protein). Can modulate gamma-secretase cleavage of APP by enhancing endoprotelysis of PSEN1.</text>
</comment>
<comment type="pathway">
    <text evidence="1">Protein modification; protein glycosylation.</text>
</comment>
<comment type="subunit">
    <text evidence="1">Component of STT3A-containing oligosaccharyl transferase (OST-A) complex. STT3A-containing complex assembly occurs through the formation of 3 subcomplexes. Subcomplex 1 contains RPN1 and TMEM258, subcomplex 2 contains the STT3A-specific subunits STT3A, DC2/OSTC, and KCP2 as well as the core subunit OST4, and subcomplex 3 contains RPN2, DAD1, and OST48. The OST-A complex can form stable complexes with the Sec61 complex or with both the Sec61 and TRAP complexes. Interacts with PSEN1 and NCSTN; indicative for an association with the gamma-secretase complex.</text>
</comment>
<comment type="subcellular location">
    <subcellularLocation>
        <location evidence="1">Endoplasmic reticulum membrane</location>
        <topology evidence="1">Multi-pass membrane protein</topology>
    </subcellularLocation>
</comment>
<comment type="similarity">
    <text evidence="3">Belongs to the KRTCAP2 family.</text>
</comment>
<comment type="sequence caution" evidence="3">
    <conflict type="erroneous initiation">
        <sequence resource="EMBL-CDS" id="AAH43030"/>
    </conflict>
</comment>